<accession>B3QZV8</accession>
<proteinExistence type="inferred from homology"/>
<evidence type="ECO:0000255" key="1">
    <source>
        <dbReference type="HAMAP-Rule" id="MF_00340"/>
    </source>
</evidence>
<evidence type="ECO:0000305" key="2"/>
<name>RL32_PHYMT</name>
<organism>
    <name type="scientific">Phytoplasma mali (strain AT)</name>
    <dbReference type="NCBI Taxonomy" id="482235"/>
    <lineage>
        <taxon>Bacteria</taxon>
        <taxon>Bacillati</taxon>
        <taxon>Mycoplasmatota</taxon>
        <taxon>Mollicutes</taxon>
        <taxon>Acholeplasmatales</taxon>
        <taxon>Acholeplasmataceae</taxon>
        <taxon>Candidatus Phytoplasma</taxon>
        <taxon>16SrX (Apple proliferation group)</taxon>
    </lineage>
</organism>
<sequence length="61" mass="7194">MAVPFRRTSKTVKRKRRTHYKLSAPNLVVCPITKNFTLPHRVTKNSGYYKDKLYLANKKID</sequence>
<comment type="similarity">
    <text evidence="1">Belongs to the bacterial ribosomal protein bL32 family.</text>
</comment>
<keyword id="KW-1185">Reference proteome</keyword>
<keyword id="KW-0687">Ribonucleoprotein</keyword>
<keyword id="KW-0689">Ribosomal protein</keyword>
<gene>
    <name evidence="1" type="primary">rpmF</name>
    <name type="ordered locus">ATP_00308</name>
</gene>
<protein>
    <recommendedName>
        <fullName evidence="1">Large ribosomal subunit protein bL32</fullName>
    </recommendedName>
    <alternativeName>
        <fullName evidence="2">50S ribosomal protein L32</fullName>
    </alternativeName>
</protein>
<dbReference type="EMBL" id="CU469464">
    <property type="protein sequence ID" value="CAP18495.1"/>
    <property type="molecule type" value="Genomic_DNA"/>
</dbReference>
<dbReference type="SMR" id="B3QZV8"/>
<dbReference type="STRING" id="37692.ATP_00308"/>
<dbReference type="KEGG" id="pml:ATP_00308"/>
<dbReference type="eggNOG" id="COG0333">
    <property type="taxonomic scope" value="Bacteria"/>
</dbReference>
<dbReference type="HOGENOM" id="CLU_129084_1_3_14"/>
<dbReference type="Proteomes" id="UP000002020">
    <property type="component" value="Chromosome"/>
</dbReference>
<dbReference type="GO" id="GO:0015934">
    <property type="term" value="C:large ribosomal subunit"/>
    <property type="evidence" value="ECO:0007669"/>
    <property type="project" value="InterPro"/>
</dbReference>
<dbReference type="GO" id="GO:0003735">
    <property type="term" value="F:structural constituent of ribosome"/>
    <property type="evidence" value="ECO:0007669"/>
    <property type="project" value="InterPro"/>
</dbReference>
<dbReference type="GO" id="GO:0006412">
    <property type="term" value="P:translation"/>
    <property type="evidence" value="ECO:0007669"/>
    <property type="project" value="UniProtKB-UniRule"/>
</dbReference>
<dbReference type="HAMAP" id="MF_00340">
    <property type="entry name" value="Ribosomal_bL32"/>
    <property type="match status" value="1"/>
</dbReference>
<dbReference type="InterPro" id="IPR002677">
    <property type="entry name" value="Ribosomal_bL32"/>
</dbReference>
<dbReference type="InterPro" id="IPR044957">
    <property type="entry name" value="Ribosomal_bL32_bact"/>
</dbReference>
<dbReference type="InterPro" id="IPR011332">
    <property type="entry name" value="Ribosomal_zn-bd"/>
</dbReference>
<dbReference type="NCBIfam" id="TIGR01031">
    <property type="entry name" value="rpmF_bact"/>
    <property type="match status" value="1"/>
</dbReference>
<dbReference type="PANTHER" id="PTHR35534">
    <property type="entry name" value="50S RIBOSOMAL PROTEIN L32"/>
    <property type="match status" value="1"/>
</dbReference>
<dbReference type="PANTHER" id="PTHR35534:SF2">
    <property type="entry name" value="LARGE RIBOSOMAL SUBUNIT PROTEIN BL32"/>
    <property type="match status" value="1"/>
</dbReference>
<dbReference type="Pfam" id="PF01783">
    <property type="entry name" value="Ribosomal_L32p"/>
    <property type="match status" value="1"/>
</dbReference>
<dbReference type="SUPFAM" id="SSF57829">
    <property type="entry name" value="Zn-binding ribosomal proteins"/>
    <property type="match status" value="1"/>
</dbReference>
<feature type="chain" id="PRO_1000195991" description="Large ribosomal subunit protein bL32">
    <location>
        <begin position="1"/>
        <end position="61"/>
    </location>
</feature>
<reference key="1">
    <citation type="journal article" date="2008" name="BMC Genomics">
        <title>The linear chromosome of the plant-pathogenic mycoplasma 'Candidatus Phytoplasma mali'.</title>
        <authorList>
            <person name="Kube M."/>
            <person name="Schneider B."/>
            <person name="Kuhl H."/>
            <person name="Dandekar T."/>
            <person name="Heitmann K."/>
            <person name="Migdoll A.M."/>
            <person name="Reinhardt R."/>
            <person name="Seemueller E."/>
        </authorList>
    </citation>
    <scope>NUCLEOTIDE SEQUENCE [LARGE SCALE GENOMIC DNA]</scope>
    <source>
        <strain>AT</strain>
    </source>
</reference>